<evidence type="ECO:0000250" key="1">
    <source>
        <dbReference type="UniProtKB" id="P33371"/>
    </source>
</evidence>
<evidence type="ECO:0000250" key="2">
    <source>
        <dbReference type="UniProtKB" id="Q5SMC7"/>
    </source>
</evidence>
<evidence type="ECO:0000305" key="3"/>
<gene>
    <name type="primary">dus</name>
    <name type="ordered locus">SE_0156</name>
</gene>
<feature type="chain" id="PRO_0000162148" description="Probable tRNA-dihydrouridine synthase">
    <location>
        <begin position="1"/>
        <end position="326"/>
    </location>
</feature>
<feature type="active site" description="Proton donor" evidence="2">
    <location>
        <position position="105"/>
    </location>
</feature>
<feature type="binding site" evidence="1">
    <location>
        <begin position="18"/>
        <end position="20"/>
    </location>
    <ligand>
        <name>FMN</name>
        <dbReference type="ChEBI" id="CHEBI:58210"/>
    </ligand>
</feature>
<feature type="binding site" evidence="1">
    <location>
        <position position="143"/>
    </location>
    <ligand>
        <name>FMN</name>
        <dbReference type="ChEBI" id="CHEBI:58210"/>
    </ligand>
</feature>
<feature type="binding site" evidence="1">
    <location>
        <begin position="208"/>
        <end position="210"/>
    </location>
    <ligand>
        <name>FMN</name>
        <dbReference type="ChEBI" id="CHEBI:58210"/>
    </ligand>
</feature>
<feature type="binding site" evidence="1">
    <location>
        <begin position="232"/>
        <end position="233"/>
    </location>
    <ligand>
        <name>FMN</name>
        <dbReference type="ChEBI" id="CHEBI:58210"/>
    </ligand>
</feature>
<reference key="1">
    <citation type="journal article" date="2003" name="Mol. Microbiol.">
        <title>Genome-based analysis of virulence genes in a non-biofilm-forming Staphylococcus epidermidis strain (ATCC 12228).</title>
        <authorList>
            <person name="Zhang Y.-Q."/>
            <person name="Ren S.-X."/>
            <person name="Li H.-L."/>
            <person name="Wang Y.-X."/>
            <person name="Fu G."/>
            <person name="Yang J."/>
            <person name="Qin Z.-Q."/>
            <person name="Miao Y.-G."/>
            <person name="Wang W.-Y."/>
            <person name="Chen R.-S."/>
            <person name="Shen Y."/>
            <person name="Chen Z."/>
            <person name="Yuan Z.-H."/>
            <person name="Zhao G.-P."/>
            <person name="Qu D."/>
            <person name="Danchin A."/>
            <person name="Wen Y.-M."/>
        </authorList>
    </citation>
    <scope>NUCLEOTIDE SEQUENCE [LARGE SCALE GENOMIC DNA]</scope>
    <source>
        <strain>ATCC 12228 / FDA PCI 1200</strain>
    </source>
</reference>
<sequence>MKENFWSTLPRPFFILAPMEDVTNIVFRHVVSEAARPDVFFTEFTNTESYCHPEGIHSVRGRLTFSDDEQPMVAHIWGDKPEQFREMSIGLADMGFKGIDLNMGCPVANVAKKGKGSGLILRPETAAEIIQASKAGGLPVSVKTRLGYYDIDEWRDWLKHVFEQDIANLSIHLRTRKEMSKVDAHWELIEAIKTLRDEIAPNTLLTINGDIPDRQTGLELANKYGIDGIMIGRGIFHNPFAFEKEPREHSSKELLGLLRLHLSLFEKYDKDEARHFKSLRRFFKIYVRGIRGASELRHQLMNTQSIAEARELLDTFEARMDARSEV</sequence>
<protein>
    <recommendedName>
        <fullName>Probable tRNA-dihydrouridine synthase</fullName>
        <ecNumber>1.3.1.-</ecNumber>
    </recommendedName>
</protein>
<dbReference type="EC" id="1.3.1.-"/>
<dbReference type="EMBL" id="AE015929">
    <property type="protein sequence ID" value="AAO03753.1"/>
    <property type="molecule type" value="Genomic_DNA"/>
</dbReference>
<dbReference type="RefSeq" id="NP_763711.1">
    <property type="nucleotide sequence ID" value="NC_004461.1"/>
</dbReference>
<dbReference type="RefSeq" id="WP_002437657.1">
    <property type="nucleotide sequence ID" value="NZ_WBME01000064.1"/>
</dbReference>
<dbReference type="SMR" id="Q8CU07"/>
<dbReference type="KEGG" id="sep:SE_0156"/>
<dbReference type="PATRIC" id="fig|176280.10.peg.144"/>
<dbReference type="eggNOG" id="COG0042">
    <property type="taxonomic scope" value="Bacteria"/>
</dbReference>
<dbReference type="HOGENOM" id="CLU_013299_0_3_9"/>
<dbReference type="OrthoDB" id="9764501at2"/>
<dbReference type="Proteomes" id="UP000001411">
    <property type="component" value="Chromosome"/>
</dbReference>
<dbReference type="GO" id="GO:0050660">
    <property type="term" value="F:flavin adenine dinucleotide binding"/>
    <property type="evidence" value="ECO:0007669"/>
    <property type="project" value="InterPro"/>
</dbReference>
<dbReference type="GO" id="GO:0000049">
    <property type="term" value="F:tRNA binding"/>
    <property type="evidence" value="ECO:0007669"/>
    <property type="project" value="UniProtKB-KW"/>
</dbReference>
<dbReference type="GO" id="GO:0017150">
    <property type="term" value="F:tRNA dihydrouridine synthase activity"/>
    <property type="evidence" value="ECO:0007669"/>
    <property type="project" value="InterPro"/>
</dbReference>
<dbReference type="CDD" id="cd02801">
    <property type="entry name" value="DUS_like_FMN"/>
    <property type="match status" value="1"/>
</dbReference>
<dbReference type="Gene3D" id="3.20.20.70">
    <property type="entry name" value="Aldolase class I"/>
    <property type="match status" value="1"/>
</dbReference>
<dbReference type="Gene3D" id="1.10.1200.80">
    <property type="entry name" value="Putative flavin oxidoreducatase, domain 2"/>
    <property type="match status" value="1"/>
</dbReference>
<dbReference type="InterPro" id="IPR013785">
    <property type="entry name" value="Aldolase_TIM"/>
</dbReference>
<dbReference type="InterPro" id="IPR035587">
    <property type="entry name" value="DUS-like_FMN-bd"/>
</dbReference>
<dbReference type="InterPro" id="IPR001269">
    <property type="entry name" value="DUS_fam"/>
</dbReference>
<dbReference type="InterPro" id="IPR024036">
    <property type="entry name" value="tRNA-dHydroUridine_Synthase_C"/>
</dbReference>
<dbReference type="InterPro" id="IPR018517">
    <property type="entry name" value="tRNA_hU_synthase_CS"/>
</dbReference>
<dbReference type="PANTHER" id="PTHR11082:SF25">
    <property type="entry name" value="DUS-LIKE FMN-BINDING DOMAIN-CONTAINING PROTEIN"/>
    <property type="match status" value="1"/>
</dbReference>
<dbReference type="PANTHER" id="PTHR11082">
    <property type="entry name" value="TRNA-DIHYDROURIDINE SYNTHASE"/>
    <property type="match status" value="1"/>
</dbReference>
<dbReference type="Pfam" id="PF01207">
    <property type="entry name" value="Dus"/>
    <property type="match status" value="1"/>
</dbReference>
<dbReference type="PIRSF" id="PIRSF006621">
    <property type="entry name" value="Dus"/>
    <property type="match status" value="1"/>
</dbReference>
<dbReference type="SUPFAM" id="SSF51395">
    <property type="entry name" value="FMN-linked oxidoreductases"/>
    <property type="match status" value="1"/>
</dbReference>
<dbReference type="PROSITE" id="PS01136">
    <property type="entry name" value="UPF0034"/>
    <property type="match status" value="1"/>
</dbReference>
<proteinExistence type="inferred from homology"/>
<accession>Q8CU07</accession>
<organism>
    <name type="scientific">Staphylococcus epidermidis (strain ATCC 12228 / FDA PCI 1200)</name>
    <dbReference type="NCBI Taxonomy" id="176280"/>
    <lineage>
        <taxon>Bacteria</taxon>
        <taxon>Bacillati</taxon>
        <taxon>Bacillota</taxon>
        <taxon>Bacilli</taxon>
        <taxon>Bacillales</taxon>
        <taxon>Staphylococcaceae</taxon>
        <taxon>Staphylococcus</taxon>
    </lineage>
</organism>
<name>DUS_STAES</name>
<comment type="function">
    <text evidence="1">Catalyzes the synthesis of 5,6-dihydrouridine (D), a modified base found in the D-loop of most tRNAs, via the reduction of the C5-C6 double bond in target uridines.</text>
</comment>
<comment type="catalytic activity">
    <reaction evidence="1">
        <text>a 5,6-dihydrouridine in tRNA + NAD(+) = a uridine in tRNA + NADH + H(+)</text>
        <dbReference type="Rhea" id="RHEA:54452"/>
        <dbReference type="Rhea" id="RHEA-COMP:13339"/>
        <dbReference type="Rhea" id="RHEA-COMP:13887"/>
        <dbReference type="ChEBI" id="CHEBI:15378"/>
        <dbReference type="ChEBI" id="CHEBI:57540"/>
        <dbReference type="ChEBI" id="CHEBI:57945"/>
        <dbReference type="ChEBI" id="CHEBI:65315"/>
        <dbReference type="ChEBI" id="CHEBI:74443"/>
    </reaction>
</comment>
<comment type="catalytic activity">
    <reaction evidence="1">
        <text>a 5,6-dihydrouridine in tRNA + NADP(+) = a uridine in tRNA + NADPH + H(+)</text>
        <dbReference type="Rhea" id="RHEA:23624"/>
        <dbReference type="Rhea" id="RHEA-COMP:13339"/>
        <dbReference type="Rhea" id="RHEA-COMP:13887"/>
        <dbReference type="ChEBI" id="CHEBI:15378"/>
        <dbReference type="ChEBI" id="CHEBI:57783"/>
        <dbReference type="ChEBI" id="CHEBI:58349"/>
        <dbReference type="ChEBI" id="CHEBI:65315"/>
        <dbReference type="ChEBI" id="CHEBI:74443"/>
    </reaction>
</comment>
<comment type="cofactor">
    <cofactor evidence="1">
        <name>FMN</name>
        <dbReference type="ChEBI" id="CHEBI:58210"/>
    </cofactor>
</comment>
<comment type="similarity">
    <text evidence="3">Belongs to the Dus family.</text>
</comment>
<keyword id="KW-0285">Flavoprotein</keyword>
<keyword id="KW-0288">FMN</keyword>
<keyword id="KW-0521">NADP</keyword>
<keyword id="KW-0560">Oxidoreductase</keyword>
<keyword id="KW-0694">RNA-binding</keyword>
<keyword id="KW-0819">tRNA processing</keyword>
<keyword id="KW-0820">tRNA-binding</keyword>